<reference key="1">
    <citation type="journal article" date="1996" name="Microbiology">
        <title>Cloning and sequencing of a 40.6 kb segment in the 73 degrees-76 degrees region of the Bacillus subtilis chromosome containing genes for trehalose metabolism and acetoin utilization.</title>
        <authorList>
            <person name="Yamamoto H."/>
            <person name="Uchiyama S."/>
            <person name="Sekiguchi J."/>
        </authorList>
    </citation>
    <scope>NUCLEOTIDE SEQUENCE [GENOMIC DNA]</scope>
    <source>
        <strain>168 / AC327</strain>
    </source>
</reference>
<reference key="2">
    <citation type="journal article" date="1997" name="Nature">
        <title>The complete genome sequence of the Gram-positive bacterium Bacillus subtilis.</title>
        <authorList>
            <person name="Kunst F."/>
            <person name="Ogasawara N."/>
            <person name="Moszer I."/>
            <person name="Albertini A.M."/>
            <person name="Alloni G."/>
            <person name="Azevedo V."/>
            <person name="Bertero M.G."/>
            <person name="Bessieres P."/>
            <person name="Bolotin A."/>
            <person name="Borchert S."/>
            <person name="Borriss R."/>
            <person name="Boursier L."/>
            <person name="Brans A."/>
            <person name="Braun M."/>
            <person name="Brignell S.C."/>
            <person name="Bron S."/>
            <person name="Brouillet S."/>
            <person name="Bruschi C.V."/>
            <person name="Caldwell B."/>
            <person name="Capuano V."/>
            <person name="Carter N.M."/>
            <person name="Choi S.-K."/>
            <person name="Codani J.-J."/>
            <person name="Connerton I.F."/>
            <person name="Cummings N.J."/>
            <person name="Daniel R.A."/>
            <person name="Denizot F."/>
            <person name="Devine K.M."/>
            <person name="Duesterhoeft A."/>
            <person name="Ehrlich S.D."/>
            <person name="Emmerson P.T."/>
            <person name="Entian K.-D."/>
            <person name="Errington J."/>
            <person name="Fabret C."/>
            <person name="Ferrari E."/>
            <person name="Foulger D."/>
            <person name="Fritz C."/>
            <person name="Fujita M."/>
            <person name="Fujita Y."/>
            <person name="Fuma S."/>
            <person name="Galizzi A."/>
            <person name="Galleron N."/>
            <person name="Ghim S.-Y."/>
            <person name="Glaser P."/>
            <person name="Goffeau A."/>
            <person name="Golightly E.J."/>
            <person name="Grandi G."/>
            <person name="Guiseppi G."/>
            <person name="Guy B.J."/>
            <person name="Haga K."/>
            <person name="Haiech J."/>
            <person name="Harwood C.R."/>
            <person name="Henaut A."/>
            <person name="Hilbert H."/>
            <person name="Holsappel S."/>
            <person name="Hosono S."/>
            <person name="Hullo M.-F."/>
            <person name="Itaya M."/>
            <person name="Jones L.-M."/>
            <person name="Joris B."/>
            <person name="Karamata D."/>
            <person name="Kasahara Y."/>
            <person name="Klaerr-Blanchard M."/>
            <person name="Klein C."/>
            <person name="Kobayashi Y."/>
            <person name="Koetter P."/>
            <person name="Koningstein G."/>
            <person name="Krogh S."/>
            <person name="Kumano M."/>
            <person name="Kurita K."/>
            <person name="Lapidus A."/>
            <person name="Lardinois S."/>
            <person name="Lauber J."/>
            <person name="Lazarevic V."/>
            <person name="Lee S.-M."/>
            <person name="Levine A."/>
            <person name="Liu H."/>
            <person name="Masuda S."/>
            <person name="Mauel C."/>
            <person name="Medigue C."/>
            <person name="Medina N."/>
            <person name="Mellado R.P."/>
            <person name="Mizuno M."/>
            <person name="Moestl D."/>
            <person name="Nakai S."/>
            <person name="Noback M."/>
            <person name="Noone D."/>
            <person name="O'Reilly M."/>
            <person name="Ogawa K."/>
            <person name="Ogiwara A."/>
            <person name="Oudega B."/>
            <person name="Park S.-H."/>
            <person name="Parro V."/>
            <person name="Pohl T.M."/>
            <person name="Portetelle D."/>
            <person name="Porwollik S."/>
            <person name="Prescott A.M."/>
            <person name="Presecan E."/>
            <person name="Pujic P."/>
            <person name="Purnelle B."/>
            <person name="Rapoport G."/>
            <person name="Rey M."/>
            <person name="Reynolds S."/>
            <person name="Rieger M."/>
            <person name="Rivolta C."/>
            <person name="Rocha E."/>
            <person name="Roche B."/>
            <person name="Rose M."/>
            <person name="Sadaie Y."/>
            <person name="Sato T."/>
            <person name="Scanlan E."/>
            <person name="Schleich S."/>
            <person name="Schroeter R."/>
            <person name="Scoffone F."/>
            <person name="Sekiguchi J."/>
            <person name="Sekowska A."/>
            <person name="Seror S.J."/>
            <person name="Serror P."/>
            <person name="Shin B.-S."/>
            <person name="Soldo B."/>
            <person name="Sorokin A."/>
            <person name="Tacconi E."/>
            <person name="Takagi T."/>
            <person name="Takahashi H."/>
            <person name="Takemaru K."/>
            <person name="Takeuchi M."/>
            <person name="Tamakoshi A."/>
            <person name="Tanaka T."/>
            <person name="Terpstra P."/>
            <person name="Tognoni A."/>
            <person name="Tosato V."/>
            <person name="Uchiyama S."/>
            <person name="Vandenbol M."/>
            <person name="Vannier F."/>
            <person name="Vassarotti A."/>
            <person name="Viari A."/>
            <person name="Wambutt R."/>
            <person name="Wedler E."/>
            <person name="Wedler H."/>
            <person name="Weitzenegger T."/>
            <person name="Winters P."/>
            <person name="Wipat A."/>
            <person name="Yamamoto H."/>
            <person name="Yamane K."/>
            <person name="Yasumoto K."/>
            <person name="Yata K."/>
            <person name="Yoshida K."/>
            <person name="Yoshikawa H.-F."/>
            <person name="Zumstein E."/>
            <person name="Yoshikawa H."/>
            <person name="Danchin A."/>
        </authorList>
    </citation>
    <scope>NUCLEOTIDE SEQUENCE [LARGE SCALE GENOMIC DNA]</scope>
    <source>
        <strain>168</strain>
    </source>
</reference>
<reference key="3">
    <citation type="journal article" date="2001" name="Nucleic Acids Res.">
        <title>Exoribonuclease superfamilies: structural analysis and phylogenetic distribution.</title>
        <authorList>
            <person name="Zuo Y."/>
            <person name="Deutscher M.P."/>
        </authorList>
    </citation>
    <scope>DISCUSSION OF SEQUENCE</scope>
</reference>
<accession>O34437</accession>
<accession>Q79EY0</accession>
<gene>
    <name type="primary">yfkH</name>
    <name type="ordered locus">BSU07900</name>
</gene>
<feature type="chain" id="PRO_0000379508" description="Putative ribonuclease-like protein YfkH">
    <location>
        <begin position="1"/>
        <end position="275"/>
    </location>
</feature>
<feature type="transmembrane region" description="Helical" evidence="1">
    <location>
        <begin position="23"/>
        <end position="43"/>
    </location>
</feature>
<feature type="transmembrane region" description="Helical" evidence="1">
    <location>
        <begin position="83"/>
        <end position="103"/>
    </location>
</feature>
<feature type="transmembrane region" description="Helical" evidence="1">
    <location>
        <begin position="126"/>
        <end position="146"/>
    </location>
</feature>
<feature type="transmembrane region" description="Helical" evidence="1">
    <location>
        <begin position="172"/>
        <end position="192"/>
    </location>
</feature>
<feature type="transmembrane region" description="Helical" evidence="1">
    <location>
        <begin position="199"/>
        <end position="219"/>
    </location>
</feature>
<feature type="transmembrane region" description="Helical" evidence="1">
    <location>
        <begin position="235"/>
        <end position="255"/>
    </location>
</feature>
<sequence>MSFLKELFSRYTLHEGQSKSAELAYFFLLSLFPFLIFMLTLTAYLPLSTDDVLGVIEQYAPASAMSLVESITHQTLNNRNGGLLSFGIIAALWSASNGMNAIVRSLNHAYDVEENRSFIIVRLTSIFLTIAMVFTILVALLLPVFGREIGRLASDFVGASDLFLSVWAAIRWGVSPLVLLIVFSALYVIAPNKKLSLRFVMPGAVFATIGWIIVSTLFSFYVSTFANYSATYGSIGGIIVLMIWFYLSGILIILGGEINALLHKRKKLPDENPYH</sequence>
<proteinExistence type="predicted"/>
<keyword id="KW-1003">Cell membrane</keyword>
<keyword id="KW-0269">Exonuclease</keyword>
<keyword id="KW-0378">Hydrolase</keyword>
<keyword id="KW-0472">Membrane</keyword>
<keyword id="KW-0540">Nuclease</keyword>
<keyword id="KW-1185">Reference proteome</keyword>
<keyword id="KW-0812">Transmembrane</keyword>
<keyword id="KW-1133">Transmembrane helix</keyword>
<dbReference type="EMBL" id="D83967">
    <property type="protein sequence ID" value="BAA23398.1"/>
    <property type="molecule type" value="Genomic_DNA"/>
</dbReference>
<dbReference type="EMBL" id="AL009126">
    <property type="protein sequence ID" value="CAB12619.1"/>
    <property type="molecule type" value="Genomic_DNA"/>
</dbReference>
<dbReference type="PIR" id="C69808">
    <property type="entry name" value="C69808"/>
</dbReference>
<dbReference type="RefSeq" id="WP_003242564.1">
    <property type="nucleotide sequence ID" value="NZ_OZ025638.1"/>
</dbReference>
<dbReference type="FunCoup" id="O34437">
    <property type="interactions" value="275"/>
</dbReference>
<dbReference type="STRING" id="224308.BSU07900"/>
<dbReference type="PaxDb" id="224308-BSU07900"/>
<dbReference type="EnsemblBacteria" id="CAB12619">
    <property type="protein sequence ID" value="CAB12619"/>
    <property type="gene ID" value="BSU_07900"/>
</dbReference>
<dbReference type="GeneID" id="936134"/>
<dbReference type="KEGG" id="bsu:BSU07900"/>
<dbReference type="PATRIC" id="fig|224308.179.peg.854"/>
<dbReference type="eggNOG" id="COG1295">
    <property type="taxonomic scope" value="Bacteria"/>
</dbReference>
<dbReference type="InParanoid" id="O34437"/>
<dbReference type="OrthoDB" id="9775903at2"/>
<dbReference type="PhylomeDB" id="O34437"/>
<dbReference type="BioCyc" id="BSUB:BSU07900-MONOMER"/>
<dbReference type="Proteomes" id="UP000001570">
    <property type="component" value="Chromosome"/>
</dbReference>
<dbReference type="GO" id="GO:0005886">
    <property type="term" value="C:plasma membrane"/>
    <property type="evidence" value="ECO:0000318"/>
    <property type="project" value="GO_Central"/>
</dbReference>
<dbReference type="GO" id="GO:0004527">
    <property type="term" value="F:exonuclease activity"/>
    <property type="evidence" value="ECO:0007669"/>
    <property type="project" value="UniProtKB-KW"/>
</dbReference>
<dbReference type="InterPro" id="IPR017039">
    <property type="entry name" value="Virul_fac_BrkB"/>
</dbReference>
<dbReference type="NCBIfam" id="TIGR00765">
    <property type="entry name" value="yihY_not_rbn"/>
    <property type="match status" value="1"/>
</dbReference>
<dbReference type="PANTHER" id="PTHR30213">
    <property type="entry name" value="INNER MEMBRANE PROTEIN YHJD"/>
    <property type="match status" value="1"/>
</dbReference>
<dbReference type="PANTHER" id="PTHR30213:SF0">
    <property type="entry name" value="UPF0761 MEMBRANE PROTEIN YIHY"/>
    <property type="match status" value="1"/>
</dbReference>
<dbReference type="Pfam" id="PF03631">
    <property type="entry name" value="Virul_fac_BrkB"/>
    <property type="match status" value="1"/>
</dbReference>
<dbReference type="PIRSF" id="PIRSF035875">
    <property type="entry name" value="RNase_BN"/>
    <property type="match status" value="1"/>
</dbReference>
<protein>
    <recommendedName>
        <fullName>Putative ribonuclease-like protein YfkH</fullName>
    </recommendedName>
</protein>
<evidence type="ECO:0000255" key="1"/>
<evidence type="ECO:0000305" key="2"/>
<comment type="subcellular location">
    <subcellularLocation>
        <location evidence="2">Cell membrane</location>
        <topology evidence="2">Multi-pass membrane protein</topology>
    </subcellularLocation>
</comment>
<organism>
    <name type="scientific">Bacillus subtilis (strain 168)</name>
    <dbReference type="NCBI Taxonomy" id="224308"/>
    <lineage>
        <taxon>Bacteria</taxon>
        <taxon>Bacillati</taxon>
        <taxon>Bacillota</taxon>
        <taxon>Bacilli</taxon>
        <taxon>Bacillales</taxon>
        <taxon>Bacillaceae</taxon>
        <taxon>Bacillus</taxon>
    </lineage>
</organism>
<name>YFKH_BACSU</name>